<feature type="chain" id="PRO_0000308568" description="Mediator of RNA polymerase II transcription subunit 20">
    <location>
        <begin position="1"/>
        <end position="218"/>
    </location>
</feature>
<comment type="function">
    <text evidence="1">Component of the Mediator complex, a coactivator involved in the regulated transcription of nearly all RNA polymerase II-dependent genes. Mediator functions as a bridge to convey information from gene-specific regulatory proteins to the basal RNA polymerase II transcription machinery. Mediator is recruited to promoters by direct interactions with regulatory proteins and serves as a scaffold for the assembly of a functional preinitiation complex with RNA polymerase II and the general transcription factors (By similarity).</text>
</comment>
<comment type="subunit">
    <text evidence="1">Component of the Mediator complex.</text>
</comment>
<comment type="subcellular location">
    <subcellularLocation>
        <location evidence="1">Nucleus</location>
    </subcellularLocation>
</comment>
<comment type="similarity">
    <text evidence="2">Belongs to the Mediator complex subunit 20 family.</text>
</comment>
<gene>
    <name type="primary">SRB2</name>
    <name type="synonym">MED20</name>
    <name type="ordered locus">YALI0C23320g</name>
</gene>
<evidence type="ECO:0000250" key="1"/>
<evidence type="ECO:0000305" key="2"/>
<proteinExistence type="inferred from homology"/>
<protein>
    <recommendedName>
        <fullName>Mediator of RNA polymerase II transcription subunit 20</fullName>
    </recommendedName>
    <alternativeName>
        <fullName>Mediator complex subunit 20</fullName>
    </alternativeName>
</protein>
<reference key="1">
    <citation type="journal article" date="2004" name="Nature">
        <title>Genome evolution in yeasts.</title>
        <authorList>
            <person name="Dujon B."/>
            <person name="Sherman D."/>
            <person name="Fischer G."/>
            <person name="Durrens P."/>
            <person name="Casaregola S."/>
            <person name="Lafontaine I."/>
            <person name="de Montigny J."/>
            <person name="Marck C."/>
            <person name="Neuveglise C."/>
            <person name="Talla E."/>
            <person name="Goffard N."/>
            <person name="Frangeul L."/>
            <person name="Aigle M."/>
            <person name="Anthouard V."/>
            <person name="Babour A."/>
            <person name="Barbe V."/>
            <person name="Barnay S."/>
            <person name="Blanchin S."/>
            <person name="Beckerich J.-M."/>
            <person name="Beyne E."/>
            <person name="Bleykasten C."/>
            <person name="Boisrame A."/>
            <person name="Boyer J."/>
            <person name="Cattolico L."/>
            <person name="Confanioleri F."/>
            <person name="de Daruvar A."/>
            <person name="Despons L."/>
            <person name="Fabre E."/>
            <person name="Fairhead C."/>
            <person name="Ferry-Dumazet H."/>
            <person name="Groppi A."/>
            <person name="Hantraye F."/>
            <person name="Hennequin C."/>
            <person name="Jauniaux N."/>
            <person name="Joyet P."/>
            <person name="Kachouri R."/>
            <person name="Kerrest A."/>
            <person name="Koszul R."/>
            <person name="Lemaire M."/>
            <person name="Lesur I."/>
            <person name="Ma L."/>
            <person name="Muller H."/>
            <person name="Nicaud J.-M."/>
            <person name="Nikolski M."/>
            <person name="Oztas S."/>
            <person name="Ozier-Kalogeropoulos O."/>
            <person name="Pellenz S."/>
            <person name="Potier S."/>
            <person name="Richard G.-F."/>
            <person name="Straub M.-L."/>
            <person name="Suleau A."/>
            <person name="Swennen D."/>
            <person name="Tekaia F."/>
            <person name="Wesolowski-Louvel M."/>
            <person name="Westhof E."/>
            <person name="Wirth B."/>
            <person name="Zeniou-Meyer M."/>
            <person name="Zivanovic Y."/>
            <person name="Bolotin-Fukuhara M."/>
            <person name="Thierry A."/>
            <person name="Bouchier C."/>
            <person name="Caudron B."/>
            <person name="Scarpelli C."/>
            <person name="Gaillardin C."/>
            <person name="Weissenbach J."/>
            <person name="Wincker P."/>
            <person name="Souciet J.-L."/>
        </authorList>
    </citation>
    <scope>NUCLEOTIDE SEQUENCE [LARGE SCALE GENOMIC DNA]</scope>
    <source>
        <strain>CLIB 122 / E 150</strain>
    </source>
</reference>
<name>MED20_YARLI</name>
<keyword id="KW-0010">Activator</keyword>
<keyword id="KW-0539">Nucleus</keyword>
<keyword id="KW-1185">Reference proteome</keyword>
<keyword id="KW-0804">Transcription</keyword>
<keyword id="KW-0805">Transcription regulation</keyword>
<sequence>MVTILQYSADVTATTISTYRSELSAQLAQNLGKWSFELKMYKPNPASIGRSEHHNGNIPQGQQEAAAADQEIGGVAALYTLTQAHSKGDMVYVTQGSAVQGQPGVVVSDSFDMVLQNKMKSIWILRQTLRGDGAEYELMGDAYGRVKVRLANVFLQGTFRGLLFQYEYEGDTLDDRQQQHLMEFIQSSGFPSSNLIIGGNGSGLVQTGTQFVEALAQK</sequence>
<accession>Q6CAY6</accession>
<dbReference type="EMBL" id="CR382129">
    <property type="protein sequence ID" value="CAG82496.1"/>
    <property type="molecule type" value="Genomic_DNA"/>
</dbReference>
<dbReference type="RefSeq" id="XP_502176.1">
    <property type="nucleotide sequence ID" value="XM_502176.1"/>
</dbReference>
<dbReference type="SMR" id="Q6CAY6"/>
<dbReference type="FunCoup" id="Q6CAY6">
    <property type="interactions" value="232"/>
</dbReference>
<dbReference type="STRING" id="284591.Q6CAY6"/>
<dbReference type="EnsemblFungi" id="CAG82496">
    <property type="protein sequence ID" value="CAG82496"/>
    <property type="gene ID" value="YALI0_C23320g"/>
</dbReference>
<dbReference type="KEGG" id="yli:2909606"/>
<dbReference type="VEuPathDB" id="FungiDB:YALI0_C23320g"/>
<dbReference type="HOGENOM" id="CLU_1267780_0_0_1"/>
<dbReference type="InParanoid" id="Q6CAY6"/>
<dbReference type="OrthoDB" id="110324at4891"/>
<dbReference type="Proteomes" id="UP000001300">
    <property type="component" value="Chromosome C"/>
</dbReference>
<dbReference type="GO" id="GO:0016592">
    <property type="term" value="C:mediator complex"/>
    <property type="evidence" value="ECO:0000318"/>
    <property type="project" value="GO_Central"/>
</dbReference>
<dbReference type="GO" id="GO:0003713">
    <property type="term" value="F:transcription coactivator activity"/>
    <property type="evidence" value="ECO:0000318"/>
    <property type="project" value="GO_Central"/>
</dbReference>
<dbReference type="GO" id="GO:0006357">
    <property type="term" value="P:regulation of transcription by RNA polymerase II"/>
    <property type="evidence" value="ECO:0000318"/>
    <property type="project" value="GO_Central"/>
</dbReference>
<dbReference type="Gene3D" id="3.30.310.180">
    <property type="match status" value="1"/>
</dbReference>
<dbReference type="InterPro" id="IPR016532">
    <property type="entry name" value="Med20"/>
</dbReference>
<dbReference type="InterPro" id="IPR013921">
    <property type="entry name" value="Mediator_Med20"/>
</dbReference>
<dbReference type="PANTHER" id="PTHR12465:SF0">
    <property type="entry name" value="MEDIATOR OF RNA POLYMERASE II TRANSCRIPTION SUBUNIT 20"/>
    <property type="match status" value="1"/>
</dbReference>
<dbReference type="PANTHER" id="PTHR12465">
    <property type="entry name" value="UBIQUITIN SPECIFIC PROTEASE HOMOLOG 49"/>
    <property type="match status" value="1"/>
</dbReference>
<dbReference type="Pfam" id="PF08612">
    <property type="entry name" value="Med20"/>
    <property type="match status" value="1"/>
</dbReference>
<dbReference type="PIRSF" id="PIRSF007945">
    <property type="entry name" value="SRB2"/>
    <property type="match status" value="1"/>
</dbReference>
<organism>
    <name type="scientific">Yarrowia lipolytica (strain CLIB 122 / E 150)</name>
    <name type="common">Yeast</name>
    <name type="synonym">Candida lipolytica</name>
    <dbReference type="NCBI Taxonomy" id="284591"/>
    <lineage>
        <taxon>Eukaryota</taxon>
        <taxon>Fungi</taxon>
        <taxon>Dikarya</taxon>
        <taxon>Ascomycota</taxon>
        <taxon>Saccharomycotina</taxon>
        <taxon>Dipodascomycetes</taxon>
        <taxon>Dipodascales</taxon>
        <taxon>Dipodascales incertae sedis</taxon>
        <taxon>Yarrowia</taxon>
    </lineage>
</organism>